<dbReference type="EC" id="5.4.3.8" evidence="1"/>
<dbReference type="EMBL" id="BX640411">
    <property type="protein sequence ID" value="CAE40692.1"/>
    <property type="molecule type" value="Genomic_DNA"/>
</dbReference>
<dbReference type="RefSeq" id="NP_879190.1">
    <property type="nucleotide sequence ID" value="NC_002929.2"/>
</dbReference>
<dbReference type="RefSeq" id="WP_010929733.1">
    <property type="nucleotide sequence ID" value="NZ_CP039022.1"/>
</dbReference>
<dbReference type="SMR" id="Q7W050"/>
<dbReference type="STRING" id="257313.BP0315"/>
<dbReference type="PaxDb" id="257313-BP0315"/>
<dbReference type="GeneID" id="69603433"/>
<dbReference type="KEGG" id="bpe:BP0315"/>
<dbReference type="PATRIC" id="fig|257313.5.peg.341"/>
<dbReference type="eggNOG" id="COG0001">
    <property type="taxonomic scope" value="Bacteria"/>
</dbReference>
<dbReference type="HOGENOM" id="CLU_016922_1_5_4"/>
<dbReference type="UniPathway" id="UPA00251">
    <property type="reaction ID" value="UER00317"/>
</dbReference>
<dbReference type="Proteomes" id="UP000002676">
    <property type="component" value="Chromosome"/>
</dbReference>
<dbReference type="GO" id="GO:0005737">
    <property type="term" value="C:cytoplasm"/>
    <property type="evidence" value="ECO:0007669"/>
    <property type="project" value="UniProtKB-SubCell"/>
</dbReference>
<dbReference type="GO" id="GO:0042286">
    <property type="term" value="F:glutamate-1-semialdehyde 2,1-aminomutase activity"/>
    <property type="evidence" value="ECO:0007669"/>
    <property type="project" value="UniProtKB-UniRule"/>
</dbReference>
<dbReference type="GO" id="GO:0030170">
    <property type="term" value="F:pyridoxal phosphate binding"/>
    <property type="evidence" value="ECO:0007669"/>
    <property type="project" value="InterPro"/>
</dbReference>
<dbReference type="GO" id="GO:0008483">
    <property type="term" value="F:transaminase activity"/>
    <property type="evidence" value="ECO:0007669"/>
    <property type="project" value="InterPro"/>
</dbReference>
<dbReference type="GO" id="GO:0006782">
    <property type="term" value="P:protoporphyrinogen IX biosynthetic process"/>
    <property type="evidence" value="ECO:0007669"/>
    <property type="project" value="UniProtKB-UniRule"/>
</dbReference>
<dbReference type="CDD" id="cd00610">
    <property type="entry name" value="OAT_like"/>
    <property type="match status" value="1"/>
</dbReference>
<dbReference type="FunFam" id="3.40.640.10:FF:000021">
    <property type="entry name" value="Glutamate-1-semialdehyde 2,1-aminomutase"/>
    <property type="match status" value="1"/>
</dbReference>
<dbReference type="Gene3D" id="3.90.1150.10">
    <property type="entry name" value="Aspartate Aminotransferase, domain 1"/>
    <property type="match status" value="1"/>
</dbReference>
<dbReference type="Gene3D" id="3.40.640.10">
    <property type="entry name" value="Type I PLP-dependent aspartate aminotransferase-like (Major domain)"/>
    <property type="match status" value="1"/>
</dbReference>
<dbReference type="HAMAP" id="MF_00375">
    <property type="entry name" value="HemL_aminotrans_3"/>
    <property type="match status" value="1"/>
</dbReference>
<dbReference type="InterPro" id="IPR004639">
    <property type="entry name" value="4pyrrol_synth_GluAld_NH2Trfase"/>
</dbReference>
<dbReference type="InterPro" id="IPR005814">
    <property type="entry name" value="Aminotrans_3"/>
</dbReference>
<dbReference type="InterPro" id="IPR049704">
    <property type="entry name" value="Aminotrans_3_PPA_site"/>
</dbReference>
<dbReference type="InterPro" id="IPR015424">
    <property type="entry name" value="PyrdxlP-dep_Trfase"/>
</dbReference>
<dbReference type="InterPro" id="IPR015421">
    <property type="entry name" value="PyrdxlP-dep_Trfase_major"/>
</dbReference>
<dbReference type="InterPro" id="IPR015422">
    <property type="entry name" value="PyrdxlP-dep_Trfase_small"/>
</dbReference>
<dbReference type="NCBIfam" id="TIGR00713">
    <property type="entry name" value="hemL"/>
    <property type="match status" value="1"/>
</dbReference>
<dbReference type="NCBIfam" id="NF000818">
    <property type="entry name" value="PRK00062.1"/>
    <property type="match status" value="1"/>
</dbReference>
<dbReference type="PANTHER" id="PTHR43713">
    <property type="entry name" value="GLUTAMATE-1-SEMIALDEHYDE 2,1-AMINOMUTASE"/>
    <property type="match status" value="1"/>
</dbReference>
<dbReference type="PANTHER" id="PTHR43713:SF3">
    <property type="entry name" value="GLUTAMATE-1-SEMIALDEHYDE 2,1-AMINOMUTASE 1, CHLOROPLASTIC-RELATED"/>
    <property type="match status" value="1"/>
</dbReference>
<dbReference type="Pfam" id="PF00202">
    <property type="entry name" value="Aminotran_3"/>
    <property type="match status" value="1"/>
</dbReference>
<dbReference type="SUPFAM" id="SSF53383">
    <property type="entry name" value="PLP-dependent transferases"/>
    <property type="match status" value="1"/>
</dbReference>
<dbReference type="PROSITE" id="PS00600">
    <property type="entry name" value="AA_TRANSFER_CLASS_3"/>
    <property type="match status" value="1"/>
</dbReference>
<evidence type="ECO:0000255" key="1">
    <source>
        <dbReference type="HAMAP-Rule" id="MF_00375"/>
    </source>
</evidence>
<gene>
    <name evidence="1" type="primary">hemL</name>
    <name type="ordered locus">BP0315</name>
</gene>
<accession>Q7W050</accession>
<keyword id="KW-0963">Cytoplasm</keyword>
<keyword id="KW-0413">Isomerase</keyword>
<keyword id="KW-0627">Porphyrin biosynthesis</keyword>
<keyword id="KW-0663">Pyridoxal phosphate</keyword>
<keyword id="KW-1185">Reference proteome</keyword>
<feature type="chain" id="PRO_0000243553" description="Glutamate-1-semialdehyde 2,1-aminomutase">
    <location>
        <begin position="1"/>
        <end position="427"/>
    </location>
</feature>
<feature type="modified residue" description="N6-(pyridoxal phosphate)lysine" evidence="1">
    <location>
        <position position="265"/>
    </location>
</feature>
<name>GSA_BORPE</name>
<comment type="catalytic activity">
    <reaction evidence="1">
        <text>(S)-4-amino-5-oxopentanoate = 5-aminolevulinate</text>
        <dbReference type="Rhea" id="RHEA:14265"/>
        <dbReference type="ChEBI" id="CHEBI:57501"/>
        <dbReference type="ChEBI" id="CHEBI:356416"/>
        <dbReference type="EC" id="5.4.3.8"/>
    </reaction>
</comment>
<comment type="cofactor">
    <cofactor evidence="1">
        <name>pyridoxal 5'-phosphate</name>
        <dbReference type="ChEBI" id="CHEBI:597326"/>
    </cofactor>
</comment>
<comment type="pathway">
    <text evidence="1">Porphyrin-containing compound metabolism; protoporphyrin-IX biosynthesis; 5-aminolevulinate from L-glutamyl-tRNA(Glu): step 2/2.</text>
</comment>
<comment type="subunit">
    <text evidence="1">Homodimer.</text>
</comment>
<comment type="subcellular location">
    <subcellularLocation>
        <location evidence="1">Cytoplasm</location>
    </subcellularLocation>
</comment>
<comment type="similarity">
    <text evidence="1">Belongs to the class-III pyridoxal-phosphate-dependent aminotransferase family. HemL subfamily.</text>
</comment>
<organism>
    <name type="scientific">Bordetella pertussis (strain Tohama I / ATCC BAA-589 / NCTC 13251)</name>
    <dbReference type="NCBI Taxonomy" id="257313"/>
    <lineage>
        <taxon>Bacteria</taxon>
        <taxon>Pseudomonadati</taxon>
        <taxon>Pseudomonadota</taxon>
        <taxon>Betaproteobacteria</taxon>
        <taxon>Burkholderiales</taxon>
        <taxon>Alcaligenaceae</taxon>
        <taxon>Bordetella</taxon>
    </lineage>
</organism>
<proteinExistence type="inferred from homology"/>
<reference key="1">
    <citation type="journal article" date="2003" name="Nat. Genet.">
        <title>Comparative analysis of the genome sequences of Bordetella pertussis, Bordetella parapertussis and Bordetella bronchiseptica.</title>
        <authorList>
            <person name="Parkhill J."/>
            <person name="Sebaihia M."/>
            <person name="Preston A."/>
            <person name="Murphy L.D."/>
            <person name="Thomson N.R."/>
            <person name="Harris D.E."/>
            <person name="Holden M.T.G."/>
            <person name="Churcher C.M."/>
            <person name="Bentley S.D."/>
            <person name="Mungall K.L."/>
            <person name="Cerdeno-Tarraga A.-M."/>
            <person name="Temple L."/>
            <person name="James K.D."/>
            <person name="Harris B."/>
            <person name="Quail M.A."/>
            <person name="Achtman M."/>
            <person name="Atkin R."/>
            <person name="Baker S."/>
            <person name="Basham D."/>
            <person name="Bason N."/>
            <person name="Cherevach I."/>
            <person name="Chillingworth T."/>
            <person name="Collins M."/>
            <person name="Cronin A."/>
            <person name="Davis P."/>
            <person name="Doggett J."/>
            <person name="Feltwell T."/>
            <person name="Goble A."/>
            <person name="Hamlin N."/>
            <person name="Hauser H."/>
            <person name="Holroyd S."/>
            <person name="Jagels K."/>
            <person name="Leather S."/>
            <person name="Moule S."/>
            <person name="Norberczak H."/>
            <person name="O'Neil S."/>
            <person name="Ormond D."/>
            <person name="Price C."/>
            <person name="Rabbinowitsch E."/>
            <person name="Rutter S."/>
            <person name="Sanders M."/>
            <person name="Saunders D."/>
            <person name="Seeger K."/>
            <person name="Sharp S."/>
            <person name="Simmonds M."/>
            <person name="Skelton J."/>
            <person name="Squares R."/>
            <person name="Squares S."/>
            <person name="Stevens K."/>
            <person name="Unwin L."/>
            <person name="Whitehead S."/>
            <person name="Barrell B.G."/>
            <person name="Maskell D.J."/>
        </authorList>
    </citation>
    <scope>NUCLEOTIDE SEQUENCE [LARGE SCALE GENOMIC DNA]</scope>
    <source>
        <strain>Tohama I / ATCC BAA-589 / NCTC 13251</strain>
    </source>
</reference>
<sequence length="427" mass="44844">MSTNAELFDRACRSIPGGVNSPVRAFRSVGGTPRFIQRAQGPYVWDAEGKQYIDYVGSWGPAILGHAHPEVVRAVQEAAVHGLSFGAPTEAEVELAEMLIARLPSLEQVRLVSSGTEATMTAIRLARGATGRHKIIKFEGCYHGHSDSLLVKAGSGLLTFGNPSSAGVPPEFVAHTLTLEFNNLAVVDAAFSQHGAEIACVIVEPVAGNMNLIKPAEGFLAGLRELCTRHGAVLIFDEVMTGFRIGPQGVQGLTGVRPDLTTLAKVIGGGMPVGAFGGRADLMTHIAPLGGVYQAGTLSGNPVAVAAGLATMRLIGEPGFYERLSAQTARLAQGLQERARAAGVPFSADAIGGMFGLYFGDRVPASFAEVSACDTEAFKRFFHAMLERGIHFAPSAFEAGFVSATHDDAVIDATLEAAEQVFATLRA</sequence>
<protein>
    <recommendedName>
        <fullName evidence="1">Glutamate-1-semialdehyde 2,1-aminomutase</fullName>
        <shortName evidence="1">GSA</shortName>
        <ecNumber evidence="1">5.4.3.8</ecNumber>
    </recommendedName>
    <alternativeName>
        <fullName evidence="1">Glutamate-1-semialdehyde aminotransferase</fullName>
        <shortName evidence="1">GSA-AT</shortName>
    </alternativeName>
</protein>